<comment type="similarity">
    <text evidence="1">Belongs to the elongation factor P family.</text>
</comment>
<gene>
    <name type="ordered locus">YPDSF_2412</name>
</gene>
<organism>
    <name type="scientific">Yersinia pestis (strain Pestoides F)</name>
    <dbReference type="NCBI Taxonomy" id="386656"/>
    <lineage>
        <taxon>Bacteria</taxon>
        <taxon>Pseudomonadati</taxon>
        <taxon>Pseudomonadota</taxon>
        <taxon>Gammaproteobacteria</taxon>
        <taxon>Enterobacterales</taxon>
        <taxon>Yersiniaceae</taxon>
        <taxon>Yersinia</taxon>
    </lineage>
</organism>
<proteinExistence type="inferred from homology"/>
<protein>
    <recommendedName>
        <fullName evidence="1">Elongation factor P-like protein</fullName>
    </recommendedName>
</protein>
<name>EFPL_YERPP</name>
<dbReference type="EMBL" id="CP000668">
    <property type="protein sequence ID" value="ABP40787.1"/>
    <property type="molecule type" value="Genomic_DNA"/>
</dbReference>
<dbReference type="SMR" id="A4TNC5"/>
<dbReference type="KEGG" id="ypp:YPDSF_2412"/>
<dbReference type="PATRIC" id="fig|386656.14.peg.3920"/>
<dbReference type="GO" id="GO:0005737">
    <property type="term" value="C:cytoplasm"/>
    <property type="evidence" value="ECO:0007669"/>
    <property type="project" value="InterPro"/>
</dbReference>
<dbReference type="GO" id="GO:0003746">
    <property type="term" value="F:translation elongation factor activity"/>
    <property type="evidence" value="ECO:0007669"/>
    <property type="project" value="UniProtKB-UniRule"/>
</dbReference>
<dbReference type="GO" id="GO:0043043">
    <property type="term" value="P:peptide biosynthetic process"/>
    <property type="evidence" value="ECO:0007669"/>
    <property type="project" value="InterPro"/>
</dbReference>
<dbReference type="CDD" id="cd04470">
    <property type="entry name" value="S1_EF-P_repeat_1"/>
    <property type="match status" value="1"/>
</dbReference>
<dbReference type="CDD" id="cd05794">
    <property type="entry name" value="S1_EF-P_repeat_2"/>
    <property type="match status" value="1"/>
</dbReference>
<dbReference type="FunFam" id="2.40.50.140:FF:000004">
    <property type="entry name" value="Elongation factor P"/>
    <property type="match status" value="1"/>
</dbReference>
<dbReference type="FunFam" id="2.30.30.30:FF:000011">
    <property type="entry name" value="Elongation factor P-like protein"/>
    <property type="match status" value="1"/>
</dbReference>
<dbReference type="FunFam" id="2.40.50.140:FF:000053">
    <property type="entry name" value="Elongation factor P-like protein"/>
    <property type="match status" value="1"/>
</dbReference>
<dbReference type="Gene3D" id="2.30.30.30">
    <property type="match status" value="1"/>
</dbReference>
<dbReference type="Gene3D" id="2.40.50.140">
    <property type="entry name" value="Nucleic acid-binding proteins"/>
    <property type="match status" value="2"/>
</dbReference>
<dbReference type="HAMAP" id="MF_00646">
    <property type="entry name" value="EFP"/>
    <property type="match status" value="1"/>
</dbReference>
<dbReference type="InterPro" id="IPR015365">
    <property type="entry name" value="Elong-fact-P_C"/>
</dbReference>
<dbReference type="InterPro" id="IPR012340">
    <property type="entry name" value="NA-bd_OB-fold"/>
</dbReference>
<dbReference type="InterPro" id="IPR014722">
    <property type="entry name" value="Rib_uL2_dom2"/>
</dbReference>
<dbReference type="InterPro" id="IPR020599">
    <property type="entry name" value="Transl_elong_fac_P/YeiP"/>
</dbReference>
<dbReference type="InterPro" id="IPR013185">
    <property type="entry name" value="Transl_elong_KOW-like"/>
</dbReference>
<dbReference type="InterPro" id="IPR011897">
    <property type="entry name" value="Transl_elong_p-like_YeiP"/>
</dbReference>
<dbReference type="InterPro" id="IPR001059">
    <property type="entry name" value="Transl_elong_P/YeiP_cen"/>
</dbReference>
<dbReference type="InterPro" id="IPR013852">
    <property type="entry name" value="Transl_elong_P/YeiP_CS"/>
</dbReference>
<dbReference type="InterPro" id="IPR008991">
    <property type="entry name" value="Translation_prot_SH3-like_sf"/>
</dbReference>
<dbReference type="NCBIfam" id="NF001810">
    <property type="entry name" value="PRK00529.1"/>
    <property type="match status" value="1"/>
</dbReference>
<dbReference type="NCBIfam" id="NF003392">
    <property type="entry name" value="PRK04542.1"/>
    <property type="match status" value="1"/>
</dbReference>
<dbReference type="NCBIfam" id="TIGR02178">
    <property type="entry name" value="yeiP"/>
    <property type="match status" value="1"/>
</dbReference>
<dbReference type="PANTHER" id="PTHR30053">
    <property type="entry name" value="ELONGATION FACTOR P"/>
    <property type="match status" value="1"/>
</dbReference>
<dbReference type="PANTHER" id="PTHR30053:SF14">
    <property type="entry name" value="TRANSLATION ELONGATION FACTOR KOW-LIKE DOMAIN-CONTAINING PROTEIN"/>
    <property type="match status" value="1"/>
</dbReference>
<dbReference type="Pfam" id="PF01132">
    <property type="entry name" value="EFP"/>
    <property type="match status" value="1"/>
</dbReference>
<dbReference type="Pfam" id="PF08207">
    <property type="entry name" value="EFP_N"/>
    <property type="match status" value="1"/>
</dbReference>
<dbReference type="Pfam" id="PF09285">
    <property type="entry name" value="Elong-fact-P_C"/>
    <property type="match status" value="1"/>
</dbReference>
<dbReference type="PIRSF" id="PIRSF005901">
    <property type="entry name" value="EF-P"/>
    <property type="match status" value="1"/>
</dbReference>
<dbReference type="SMART" id="SM01185">
    <property type="entry name" value="EFP"/>
    <property type="match status" value="1"/>
</dbReference>
<dbReference type="SMART" id="SM00841">
    <property type="entry name" value="Elong-fact-P_C"/>
    <property type="match status" value="1"/>
</dbReference>
<dbReference type="SUPFAM" id="SSF50249">
    <property type="entry name" value="Nucleic acid-binding proteins"/>
    <property type="match status" value="2"/>
</dbReference>
<dbReference type="SUPFAM" id="SSF50104">
    <property type="entry name" value="Translation proteins SH3-like domain"/>
    <property type="match status" value="1"/>
</dbReference>
<dbReference type="PROSITE" id="PS01275">
    <property type="entry name" value="EFP"/>
    <property type="match status" value="1"/>
</dbReference>
<reference key="1">
    <citation type="submission" date="2007-02" db="EMBL/GenBank/DDBJ databases">
        <title>Complete sequence of chromosome of Yersinia pestis Pestoides F.</title>
        <authorList>
            <consortium name="US DOE Joint Genome Institute"/>
            <person name="Copeland A."/>
            <person name="Lucas S."/>
            <person name="Lapidus A."/>
            <person name="Barry K."/>
            <person name="Detter J.C."/>
            <person name="Glavina del Rio T."/>
            <person name="Hammon N."/>
            <person name="Israni S."/>
            <person name="Dalin E."/>
            <person name="Tice H."/>
            <person name="Pitluck S."/>
            <person name="Di Bartolo G."/>
            <person name="Chain P."/>
            <person name="Malfatti S."/>
            <person name="Shin M."/>
            <person name="Vergez L."/>
            <person name="Schmutz J."/>
            <person name="Larimer F."/>
            <person name="Land M."/>
            <person name="Hauser L."/>
            <person name="Worsham P."/>
            <person name="Chu M."/>
            <person name="Bearden S."/>
            <person name="Garcia E."/>
            <person name="Richardson P."/>
        </authorList>
    </citation>
    <scope>NUCLEOTIDE SEQUENCE [LARGE SCALE GENOMIC DNA]</scope>
    <source>
        <strain>Pestoides F</strain>
    </source>
</reference>
<evidence type="ECO:0000255" key="1">
    <source>
        <dbReference type="HAMAP-Rule" id="MF_00646"/>
    </source>
</evidence>
<feature type="chain" id="PRO_1000056950" description="Elongation factor P-like protein">
    <location>
        <begin position="1"/>
        <end position="190"/>
    </location>
</feature>
<sequence length="190" mass="21271">MAKANEIKRGMAVNLNGKLLLVKDIDVQSPSARGASTLYKMRFSDVRTGLKVEERFKGDENLDTITLTRRAVNFSYIDGDEYVFMDDEDYTPYNFKKEQIEDELLFIPEGGMPGMQVLTMEGQLLALELPQTVDMEIVDTAPSIKGASASARNKPAIMSTGLSIQVPEYISPGEKIRIHIAERRYMGRAD</sequence>
<accession>A4TNC5</accession>